<evidence type="ECO:0000255" key="1">
    <source>
        <dbReference type="HAMAP-Rule" id="MF_00375"/>
    </source>
</evidence>
<dbReference type="EC" id="5.4.3.8" evidence="1"/>
<dbReference type="EMBL" id="CP000656">
    <property type="protein sequence ID" value="ABP42550.1"/>
    <property type="molecule type" value="Genomic_DNA"/>
</dbReference>
<dbReference type="SMR" id="A4T358"/>
<dbReference type="STRING" id="350054.Mflv_0054"/>
<dbReference type="KEGG" id="mgi:Mflv_0054"/>
<dbReference type="eggNOG" id="COG0001">
    <property type="taxonomic scope" value="Bacteria"/>
</dbReference>
<dbReference type="HOGENOM" id="CLU_016922_1_5_11"/>
<dbReference type="OrthoDB" id="9801052at2"/>
<dbReference type="UniPathway" id="UPA00251">
    <property type="reaction ID" value="UER00317"/>
</dbReference>
<dbReference type="GO" id="GO:0005737">
    <property type="term" value="C:cytoplasm"/>
    <property type="evidence" value="ECO:0007669"/>
    <property type="project" value="UniProtKB-SubCell"/>
</dbReference>
<dbReference type="GO" id="GO:0042286">
    <property type="term" value="F:glutamate-1-semialdehyde 2,1-aminomutase activity"/>
    <property type="evidence" value="ECO:0007669"/>
    <property type="project" value="UniProtKB-UniRule"/>
</dbReference>
<dbReference type="GO" id="GO:0030170">
    <property type="term" value="F:pyridoxal phosphate binding"/>
    <property type="evidence" value="ECO:0007669"/>
    <property type="project" value="InterPro"/>
</dbReference>
<dbReference type="GO" id="GO:0008483">
    <property type="term" value="F:transaminase activity"/>
    <property type="evidence" value="ECO:0007669"/>
    <property type="project" value="InterPro"/>
</dbReference>
<dbReference type="GO" id="GO:0006782">
    <property type="term" value="P:protoporphyrinogen IX biosynthetic process"/>
    <property type="evidence" value="ECO:0007669"/>
    <property type="project" value="UniProtKB-UniRule"/>
</dbReference>
<dbReference type="CDD" id="cd00610">
    <property type="entry name" value="OAT_like"/>
    <property type="match status" value="1"/>
</dbReference>
<dbReference type="FunFam" id="3.40.640.10:FF:000021">
    <property type="entry name" value="Glutamate-1-semialdehyde 2,1-aminomutase"/>
    <property type="match status" value="1"/>
</dbReference>
<dbReference type="Gene3D" id="3.90.1150.10">
    <property type="entry name" value="Aspartate Aminotransferase, domain 1"/>
    <property type="match status" value="1"/>
</dbReference>
<dbReference type="Gene3D" id="3.40.640.10">
    <property type="entry name" value="Type I PLP-dependent aspartate aminotransferase-like (Major domain)"/>
    <property type="match status" value="1"/>
</dbReference>
<dbReference type="HAMAP" id="MF_00375">
    <property type="entry name" value="HemL_aminotrans_3"/>
    <property type="match status" value="1"/>
</dbReference>
<dbReference type="InterPro" id="IPR004639">
    <property type="entry name" value="4pyrrol_synth_GluAld_NH2Trfase"/>
</dbReference>
<dbReference type="InterPro" id="IPR005814">
    <property type="entry name" value="Aminotrans_3"/>
</dbReference>
<dbReference type="InterPro" id="IPR049704">
    <property type="entry name" value="Aminotrans_3_PPA_site"/>
</dbReference>
<dbReference type="InterPro" id="IPR015424">
    <property type="entry name" value="PyrdxlP-dep_Trfase"/>
</dbReference>
<dbReference type="InterPro" id="IPR015421">
    <property type="entry name" value="PyrdxlP-dep_Trfase_major"/>
</dbReference>
<dbReference type="InterPro" id="IPR015422">
    <property type="entry name" value="PyrdxlP-dep_Trfase_small"/>
</dbReference>
<dbReference type="NCBIfam" id="TIGR00713">
    <property type="entry name" value="hemL"/>
    <property type="match status" value="1"/>
</dbReference>
<dbReference type="NCBIfam" id="NF000818">
    <property type="entry name" value="PRK00062.1"/>
    <property type="match status" value="1"/>
</dbReference>
<dbReference type="PANTHER" id="PTHR43713">
    <property type="entry name" value="GLUTAMATE-1-SEMIALDEHYDE 2,1-AMINOMUTASE"/>
    <property type="match status" value="1"/>
</dbReference>
<dbReference type="PANTHER" id="PTHR43713:SF3">
    <property type="entry name" value="GLUTAMATE-1-SEMIALDEHYDE 2,1-AMINOMUTASE 1, CHLOROPLASTIC-RELATED"/>
    <property type="match status" value="1"/>
</dbReference>
<dbReference type="Pfam" id="PF00202">
    <property type="entry name" value="Aminotran_3"/>
    <property type="match status" value="1"/>
</dbReference>
<dbReference type="SUPFAM" id="SSF53383">
    <property type="entry name" value="PLP-dependent transferases"/>
    <property type="match status" value="1"/>
</dbReference>
<dbReference type="PROSITE" id="PS00600">
    <property type="entry name" value="AA_TRANSFER_CLASS_3"/>
    <property type="match status" value="1"/>
</dbReference>
<keyword id="KW-0963">Cytoplasm</keyword>
<keyword id="KW-0413">Isomerase</keyword>
<keyword id="KW-0627">Porphyrin biosynthesis</keyword>
<keyword id="KW-0663">Pyridoxal phosphate</keyword>
<organism>
    <name type="scientific">Mycolicibacterium gilvum (strain PYR-GCK)</name>
    <name type="common">Mycobacterium gilvum (strain PYR-GCK)</name>
    <dbReference type="NCBI Taxonomy" id="350054"/>
    <lineage>
        <taxon>Bacteria</taxon>
        <taxon>Bacillati</taxon>
        <taxon>Actinomycetota</taxon>
        <taxon>Actinomycetes</taxon>
        <taxon>Mycobacteriales</taxon>
        <taxon>Mycobacteriaceae</taxon>
        <taxon>Mycolicibacterium</taxon>
    </lineage>
</organism>
<protein>
    <recommendedName>
        <fullName evidence="1">Glutamate-1-semialdehyde 2,1-aminomutase</fullName>
        <shortName evidence="1">GSA</shortName>
        <ecNumber evidence="1">5.4.3.8</ecNumber>
    </recommendedName>
    <alternativeName>
        <fullName evidence="1">Glutamate-1-semialdehyde aminotransferase</fullName>
        <shortName evidence="1">GSA-AT</shortName>
    </alternativeName>
</protein>
<gene>
    <name evidence="1" type="primary">hemL</name>
    <name type="ordered locus">Mflv_0054</name>
</gene>
<reference key="1">
    <citation type="submission" date="2007-04" db="EMBL/GenBank/DDBJ databases">
        <title>Complete sequence of chromosome of Mycobacterium gilvum PYR-GCK.</title>
        <authorList>
            <consortium name="US DOE Joint Genome Institute"/>
            <person name="Copeland A."/>
            <person name="Lucas S."/>
            <person name="Lapidus A."/>
            <person name="Barry K."/>
            <person name="Detter J.C."/>
            <person name="Glavina del Rio T."/>
            <person name="Hammon N."/>
            <person name="Israni S."/>
            <person name="Dalin E."/>
            <person name="Tice H."/>
            <person name="Pitluck S."/>
            <person name="Chain P."/>
            <person name="Malfatti S."/>
            <person name="Shin M."/>
            <person name="Vergez L."/>
            <person name="Schmutz J."/>
            <person name="Larimer F."/>
            <person name="Land M."/>
            <person name="Hauser L."/>
            <person name="Kyrpides N."/>
            <person name="Mikhailova N."/>
            <person name="Miller C."/>
            <person name="Richardson P."/>
        </authorList>
    </citation>
    <scope>NUCLEOTIDE SEQUENCE [LARGE SCALE GENOMIC DNA]</scope>
    <source>
        <strain>PYR-GCK</strain>
    </source>
</reference>
<name>GSA_MYCGI</name>
<comment type="catalytic activity">
    <reaction evidence="1">
        <text>(S)-4-amino-5-oxopentanoate = 5-aminolevulinate</text>
        <dbReference type="Rhea" id="RHEA:14265"/>
        <dbReference type="ChEBI" id="CHEBI:57501"/>
        <dbReference type="ChEBI" id="CHEBI:356416"/>
        <dbReference type="EC" id="5.4.3.8"/>
    </reaction>
</comment>
<comment type="cofactor">
    <cofactor evidence="1">
        <name>pyridoxal 5'-phosphate</name>
        <dbReference type="ChEBI" id="CHEBI:597326"/>
    </cofactor>
</comment>
<comment type="pathway">
    <text evidence="1">Porphyrin-containing compound metabolism; protoporphyrin-IX biosynthesis; 5-aminolevulinate from L-glutamyl-tRNA(Glu): step 2/2.</text>
</comment>
<comment type="subunit">
    <text evidence="1">Homodimer.</text>
</comment>
<comment type="subcellular location">
    <subcellularLocation>
        <location evidence="1">Cytoplasm</location>
    </subcellularLocation>
</comment>
<comment type="similarity">
    <text evidence="1">Belongs to the class-III pyridoxal-phosphate-dependent aminotransferase family. HemL subfamily.</text>
</comment>
<feature type="chain" id="PRO_0000382345" description="Glutamate-1-semialdehyde 2,1-aminomutase">
    <location>
        <begin position="1"/>
        <end position="432"/>
    </location>
</feature>
<feature type="modified residue" description="N6-(pyridoxal phosphate)lysine" evidence="1">
    <location>
        <position position="268"/>
    </location>
</feature>
<accession>A4T358</accession>
<sequence length="432" mass="44410">MSTTEESAKLFADASSVIPGGVNSPVRAFNSVGGTPRFITSAKGCRLTDVDGNQYVDLVCSWGPMILGHAHPAVVEAVQRVAAHGLSFGAPTPSESELAREIIDRVAPVERVRLVNSGTEATMSAIRLARGFTGRAKIVKFSGCYHGHSDALLADAGSGVATLGLPSSPGVTGAAAADTLVLPYNNVAAVEEIFAQFGDEIACVITEASPGNMGTVPPLPGFNAALRRITAAHGALLIVDEVMTGFRVSRSGWYGLDPVDADLFTFGKVMSGGLPAAAFGGTAEVMGRLAPLGPVYQAGTLSGNPVAMAAGLATLRAADDAAYAKLDANADRLVGLIGDALTEAGVTHQIPRAGNMFSVFFGGDPVTDFASAKATETWRFPAFFHALLDAGIYPPPSAYEAWFVSTALDDEAFDRIADALPGAARAAAQAAA</sequence>
<proteinExistence type="inferred from homology"/>